<dbReference type="EC" id="2.7.7.23" evidence="1"/>
<dbReference type="EC" id="2.3.1.157" evidence="1"/>
<dbReference type="EMBL" id="AM180252">
    <property type="protein sequence ID" value="CAJ54855.1"/>
    <property type="molecule type" value="Genomic_DNA"/>
</dbReference>
<dbReference type="RefSeq" id="WP_011526884.1">
    <property type="nucleotide sequence ID" value="NC_008011.1"/>
</dbReference>
<dbReference type="SMR" id="Q1MQ72"/>
<dbReference type="STRING" id="363253.LI0801"/>
<dbReference type="KEGG" id="lip:LI0801"/>
<dbReference type="eggNOG" id="COG1207">
    <property type="taxonomic scope" value="Bacteria"/>
</dbReference>
<dbReference type="HOGENOM" id="CLU_029499_15_2_7"/>
<dbReference type="OrthoDB" id="9775031at2"/>
<dbReference type="UniPathway" id="UPA00113">
    <property type="reaction ID" value="UER00532"/>
</dbReference>
<dbReference type="UniPathway" id="UPA00113">
    <property type="reaction ID" value="UER00533"/>
</dbReference>
<dbReference type="UniPathway" id="UPA00973"/>
<dbReference type="Proteomes" id="UP000002430">
    <property type="component" value="Chromosome"/>
</dbReference>
<dbReference type="GO" id="GO:0005737">
    <property type="term" value="C:cytoplasm"/>
    <property type="evidence" value="ECO:0007669"/>
    <property type="project" value="UniProtKB-SubCell"/>
</dbReference>
<dbReference type="GO" id="GO:0016020">
    <property type="term" value="C:membrane"/>
    <property type="evidence" value="ECO:0007669"/>
    <property type="project" value="GOC"/>
</dbReference>
<dbReference type="GO" id="GO:0019134">
    <property type="term" value="F:glucosamine-1-phosphate N-acetyltransferase activity"/>
    <property type="evidence" value="ECO:0007669"/>
    <property type="project" value="UniProtKB-UniRule"/>
</dbReference>
<dbReference type="GO" id="GO:0000287">
    <property type="term" value="F:magnesium ion binding"/>
    <property type="evidence" value="ECO:0007669"/>
    <property type="project" value="UniProtKB-UniRule"/>
</dbReference>
<dbReference type="GO" id="GO:0003977">
    <property type="term" value="F:UDP-N-acetylglucosamine diphosphorylase activity"/>
    <property type="evidence" value="ECO:0007669"/>
    <property type="project" value="UniProtKB-UniRule"/>
</dbReference>
<dbReference type="GO" id="GO:0000902">
    <property type="term" value="P:cell morphogenesis"/>
    <property type="evidence" value="ECO:0007669"/>
    <property type="project" value="UniProtKB-UniRule"/>
</dbReference>
<dbReference type="GO" id="GO:0071555">
    <property type="term" value="P:cell wall organization"/>
    <property type="evidence" value="ECO:0007669"/>
    <property type="project" value="UniProtKB-KW"/>
</dbReference>
<dbReference type="GO" id="GO:0009245">
    <property type="term" value="P:lipid A biosynthetic process"/>
    <property type="evidence" value="ECO:0007669"/>
    <property type="project" value="UniProtKB-UniRule"/>
</dbReference>
<dbReference type="GO" id="GO:0009252">
    <property type="term" value="P:peptidoglycan biosynthetic process"/>
    <property type="evidence" value="ECO:0007669"/>
    <property type="project" value="UniProtKB-UniRule"/>
</dbReference>
<dbReference type="GO" id="GO:0008360">
    <property type="term" value="P:regulation of cell shape"/>
    <property type="evidence" value="ECO:0007669"/>
    <property type="project" value="UniProtKB-KW"/>
</dbReference>
<dbReference type="GO" id="GO:0006048">
    <property type="term" value="P:UDP-N-acetylglucosamine biosynthetic process"/>
    <property type="evidence" value="ECO:0007669"/>
    <property type="project" value="UniProtKB-UniPathway"/>
</dbReference>
<dbReference type="CDD" id="cd02540">
    <property type="entry name" value="GT2_GlmU_N_bac"/>
    <property type="match status" value="1"/>
</dbReference>
<dbReference type="CDD" id="cd03353">
    <property type="entry name" value="LbH_GlmU_C"/>
    <property type="match status" value="1"/>
</dbReference>
<dbReference type="Gene3D" id="2.160.10.10">
    <property type="entry name" value="Hexapeptide repeat proteins"/>
    <property type="match status" value="1"/>
</dbReference>
<dbReference type="Gene3D" id="3.90.550.10">
    <property type="entry name" value="Spore Coat Polysaccharide Biosynthesis Protein SpsA, Chain A"/>
    <property type="match status" value="1"/>
</dbReference>
<dbReference type="HAMAP" id="MF_01631">
    <property type="entry name" value="GlmU"/>
    <property type="match status" value="1"/>
</dbReference>
<dbReference type="InterPro" id="IPR005882">
    <property type="entry name" value="Bifunctional_GlmU"/>
</dbReference>
<dbReference type="InterPro" id="IPR050065">
    <property type="entry name" value="GlmU-like"/>
</dbReference>
<dbReference type="InterPro" id="IPR038009">
    <property type="entry name" value="GlmU_C_LbH"/>
</dbReference>
<dbReference type="InterPro" id="IPR018357">
    <property type="entry name" value="Hexapep_transf_CS"/>
</dbReference>
<dbReference type="InterPro" id="IPR025877">
    <property type="entry name" value="MobA-like_NTP_Trfase"/>
</dbReference>
<dbReference type="InterPro" id="IPR029044">
    <property type="entry name" value="Nucleotide-diphossugar_trans"/>
</dbReference>
<dbReference type="InterPro" id="IPR011004">
    <property type="entry name" value="Trimer_LpxA-like_sf"/>
</dbReference>
<dbReference type="NCBIfam" id="TIGR01173">
    <property type="entry name" value="glmU"/>
    <property type="match status" value="1"/>
</dbReference>
<dbReference type="NCBIfam" id="NF010936">
    <property type="entry name" value="PRK14356.1"/>
    <property type="match status" value="1"/>
</dbReference>
<dbReference type="PANTHER" id="PTHR43584:SF3">
    <property type="entry name" value="BIFUNCTIONAL PROTEIN GLMU"/>
    <property type="match status" value="1"/>
</dbReference>
<dbReference type="PANTHER" id="PTHR43584">
    <property type="entry name" value="NUCLEOTIDYL TRANSFERASE"/>
    <property type="match status" value="1"/>
</dbReference>
<dbReference type="Pfam" id="PF12804">
    <property type="entry name" value="NTP_transf_3"/>
    <property type="match status" value="1"/>
</dbReference>
<dbReference type="SUPFAM" id="SSF53448">
    <property type="entry name" value="Nucleotide-diphospho-sugar transferases"/>
    <property type="match status" value="1"/>
</dbReference>
<dbReference type="SUPFAM" id="SSF51161">
    <property type="entry name" value="Trimeric LpxA-like enzymes"/>
    <property type="match status" value="1"/>
</dbReference>
<dbReference type="PROSITE" id="PS00101">
    <property type="entry name" value="HEXAPEP_TRANSFERASES"/>
    <property type="match status" value="1"/>
</dbReference>
<organism>
    <name type="scientific">Lawsonia intracellularis (strain PHE/MN1-00)</name>
    <dbReference type="NCBI Taxonomy" id="363253"/>
    <lineage>
        <taxon>Bacteria</taxon>
        <taxon>Pseudomonadati</taxon>
        <taxon>Thermodesulfobacteriota</taxon>
        <taxon>Desulfovibrionia</taxon>
        <taxon>Desulfovibrionales</taxon>
        <taxon>Desulfovibrionaceae</taxon>
        <taxon>Lawsonia</taxon>
    </lineage>
</organism>
<accession>Q1MQ72</accession>
<proteinExistence type="inferred from homology"/>
<name>GLMU_LAWIP</name>
<gene>
    <name evidence="1" type="primary">glmU</name>
    <name type="ordered locus">LI0801</name>
</gene>
<feature type="chain" id="PRO_0000263138" description="Bifunctional protein GlmU">
    <location>
        <begin position="1"/>
        <end position="457"/>
    </location>
</feature>
<feature type="region of interest" description="Pyrophosphorylase" evidence="1">
    <location>
        <begin position="1"/>
        <end position="236"/>
    </location>
</feature>
<feature type="region of interest" description="Linker" evidence="1">
    <location>
        <begin position="237"/>
        <end position="257"/>
    </location>
</feature>
<feature type="region of interest" description="N-acetyltransferase" evidence="1">
    <location>
        <begin position="258"/>
        <end position="457"/>
    </location>
</feature>
<feature type="active site" description="Proton acceptor" evidence="1">
    <location>
        <position position="370"/>
    </location>
</feature>
<feature type="binding site" evidence="1">
    <location>
        <begin position="14"/>
        <end position="17"/>
    </location>
    <ligand>
        <name>UDP-N-acetyl-alpha-D-glucosamine</name>
        <dbReference type="ChEBI" id="CHEBI:57705"/>
    </ligand>
</feature>
<feature type="binding site" evidence="1">
    <location>
        <position position="28"/>
    </location>
    <ligand>
        <name>UDP-N-acetyl-alpha-D-glucosamine</name>
        <dbReference type="ChEBI" id="CHEBI:57705"/>
    </ligand>
</feature>
<feature type="binding site" evidence="1">
    <location>
        <position position="79"/>
    </location>
    <ligand>
        <name>UDP-N-acetyl-alpha-D-glucosamine</name>
        <dbReference type="ChEBI" id="CHEBI:57705"/>
    </ligand>
</feature>
<feature type="binding site" evidence="1">
    <location>
        <begin position="84"/>
        <end position="85"/>
    </location>
    <ligand>
        <name>UDP-N-acetyl-alpha-D-glucosamine</name>
        <dbReference type="ChEBI" id="CHEBI:57705"/>
    </ligand>
</feature>
<feature type="binding site" evidence="1">
    <location>
        <position position="110"/>
    </location>
    <ligand>
        <name>Mg(2+)</name>
        <dbReference type="ChEBI" id="CHEBI:18420"/>
    </ligand>
</feature>
<feature type="binding site" evidence="1">
    <location>
        <position position="145"/>
    </location>
    <ligand>
        <name>UDP-N-acetyl-alpha-D-glucosamine</name>
        <dbReference type="ChEBI" id="CHEBI:57705"/>
    </ligand>
</feature>
<feature type="binding site" evidence="1">
    <location>
        <position position="159"/>
    </location>
    <ligand>
        <name>UDP-N-acetyl-alpha-D-glucosamine</name>
        <dbReference type="ChEBI" id="CHEBI:57705"/>
    </ligand>
</feature>
<feature type="binding site" evidence="1">
    <location>
        <position position="176"/>
    </location>
    <ligand>
        <name>UDP-N-acetyl-alpha-D-glucosamine</name>
        <dbReference type="ChEBI" id="CHEBI:57705"/>
    </ligand>
</feature>
<feature type="binding site" evidence="1">
    <location>
        <position position="234"/>
    </location>
    <ligand>
        <name>Mg(2+)</name>
        <dbReference type="ChEBI" id="CHEBI:18420"/>
    </ligand>
</feature>
<feature type="binding site" evidence="1">
    <location>
        <position position="234"/>
    </location>
    <ligand>
        <name>UDP-N-acetyl-alpha-D-glucosamine</name>
        <dbReference type="ChEBI" id="CHEBI:57705"/>
    </ligand>
</feature>
<feature type="binding site" evidence="1">
    <location>
        <position position="340"/>
    </location>
    <ligand>
        <name>UDP-N-acetyl-alpha-D-glucosamine</name>
        <dbReference type="ChEBI" id="CHEBI:57705"/>
    </ligand>
</feature>
<feature type="binding site" evidence="1">
    <location>
        <position position="358"/>
    </location>
    <ligand>
        <name>UDP-N-acetyl-alpha-D-glucosamine</name>
        <dbReference type="ChEBI" id="CHEBI:57705"/>
    </ligand>
</feature>
<feature type="binding site" evidence="1">
    <location>
        <position position="373"/>
    </location>
    <ligand>
        <name>UDP-N-acetyl-alpha-D-glucosamine</name>
        <dbReference type="ChEBI" id="CHEBI:57705"/>
    </ligand>
</feature>
<feature type="binding site" evidence="1">
    <location>
        <position position="384"/>
    </location>
    <ligand>
        <name>UDP-N-acetyl-alpha-D-glucosamine</name>
        <dbReference type="ChEBI" id="CHEBI:57705"/>
    </ligand>
</feature>
<feature type="binding site" evidence="1">
    <location>
        <position position="387"/>
    </location>
    <ligand>
        <name>acetyl-CoA</name>
        <dbReference type="ChEBI" id="CHEBI:57288"/>
    </ligand>
</feature>
<feature type="binding site" evidence="1">
    <location>
        <begin position="393"/>
        <end position="394"/>
    </location>
    <ligand>
        <name>acetyl-CoA</name>
        <dbReference type="ChEBI" id="CHEBI:57288"/>
    </ligand>
</feature>
<feature type="binding site" evidence="1">
    <location>
        <position position="412"/>
    </location>
    <ligand>
        <name>acetyl-CoA</name>
        <dbReference type="ChEBI" id="CHEBI:57288"/>
    </ligand>
</feature>
<feature type="binding site" evidence="1">
    <location>
        <position position="430"/>
    </location>
    <ligand>
        <name>acetyl-CoA</name>
        <dbReference type="ChEBI" id="CHEBI:57288"/>
    </ligand>
</feature>
<feature type="binding site" evidence="1">
    <location>
        <position position="447"/>
    </location>
    <ligand>
        <name>acetyl-CoA</name>
        <dbReference type="ChEBI" id="CHEBI:57288"/>
    </ligand>
</feature>
<keyword id="KW-0012">Acyltransferase</keyword>
<keyword id="KW-0133">Cell shape</keyword>
<keyword id="KW-0961">Cell wall biogenesis/degradation</keyword>
<keyword id="KW-0963">Cytoplasm</keyword>
<keyword id="KW-0460">Magnesium</keyword>
<keyword id="KW-0479">Metal-binding</keyword>
<keyword id="KW-0511">Multifunctional enzyme</keyword>
<keyword id="KW-0548">Nucleotidyltransferase</keyword>
<keyword id="KW-0573">Peptidoglycan synthesis</keyword>
<keyword id="KW-1185">Reference proteome</keyword>
<keyword id="KW-0677">Repeat</keyword>
<keyword id="KW-0808">Transferase</keyword>
<comment type="function">
    <text evidence="1">Catalyzes the last two sequential reactions in the de novo biosynthetic pathway for UDP-N-acetylglucosamine (UDP-GlcNAc). The C-terminal domain catalyzes the transfer of acetyl group from acetyl coenzyme A to glucosamine-1-phosphate (GlcN-1-P) to produce N-acetylglucosamine-1-phosphate (GlcNAc-1-P), which is converted into UDP-GlcNAc by the transfer of uridine 5-monophosphate (from uridine 5-triphosphate), a reaction catalyzed by the N-terminal domain.</text>
</comment>
<comment type="catalytic activity">
    <reaction evidence="1">
        <text>alpha-D-glucosamine 1-phosphate + acetyl-CoA = N-acetyl-alpha-D-glucosamine 1-phosphate + CoA + H(+)</text>
        <dbReference type="Rhea" id="RHEA:13725"/>
        <dbReference type="ChEBI" id="CHEBI:15378"/>
        <dbReference type="ChEBI" id="CHEBI:57287"/>
        <dbReference type="ChEBI" id="CHEBI:57288"/>
        <dbReference type="ChEBI" id="CHEBI:57776"/>
        <dbReference type="ChEBI" id="CHEBI:58516"/>
        <dbReference type="EC" id="2.3.1.157"/>
    </reaction>
</comment>
<comment type="catalytic activity">
    <reaction evidence="1">
        <text>N-acetyl-alpha-D-glucosamine 1-phosphate + UTP + H(+) = UDP-N-acetyl-alpha-D-glucosamine + diphosphate</text>
        <dbReference type="Rhea" id="RHEA:13509"/>
        <dbReference type="ChEBI" id="CHEBI:15378"/>
        <dbReference type="ChEBI" id="CHEBI:33019"/>
        <dbReference type="ChEBI" id="CHEBI:46398"/>
        <dbReference type="ChEBI" id="CHEBI:57705"/>
        <dbReference type="ChEBI" id="CHEBI:57776"/>
        <dbReference type="EC" id="2.7.7.23"/>
    </reaction>
</comment>
<comment type="cofactor">
    <cofactor evidence="1">
        <name>Mg(2+)</name>
        <dbReference type="ChEBI" id="CHEBI:18420"/>
    </cofactor>
    <text evidence="1">Binds 1 Mg(2+) ion per subunit.</text>
</comment>
<comment type="pathway">
    <text evidence="1">Nucleotide-sugar biosynthesis; UDP-N-acetyl-alpha-D-glucosamine biosynthesis; N-acetyl-alpha-D-glucosamine 1-phosphate from alpha-D-glucosamine 6-phosphate (route II): step 2/2.</text>
</comment>
<comment type="pathway">
    <text evidence="1">Nucleotide-sugar biosynthesis; UDP-N-acetyl-alpha-D-glucosamine biosynthesis; UDP-N-acetyl-alpha-D-glucosamine from N-acetyl-alpha-D-glucosamine 1-phosphate: step 1/1.</text>
</comment>
<comment type="pathway">
    <text evidence="1">Bacterial outer membrane biogenesis; LPS lipid A biosynthesis.</text>
</comment>
<comment type="subunit">
    <text evidence="1">Homotrimer.</text>
</comment>
<comment type="subcellular location">
    <subcellularLocation>
        <location evidence="1">Cytoplasm</location>
    </subcellularLocation>
</comment>
<comment type="similarity">
    <text evidence="1">In the N-terminal section; belongs to the N-acetylglucosamine-1-phosphate uridyltransferase family.</text>
</comment>
<comment type="similarity">
    <text evidence="1">In the C-terminal section; belongs to the transferase hexapeptide repeat family.</text>
</comment>
<evidence type="ECO:0000255" key="1">
    <source>
        <dbReference type="HAMAP-Rule" id="MF_01631"/>
    </source>
</evidence>
<reference key="1">
    <citation type="submission" date="2005-11" db="EMBL/GenBank/DDBJ databases">
        <title>The complete genome sequence of Lawsonia intracellularis: the causative agent of proliferative enteropathy.</title>
        <authorList>
            <person name="Kaur K."/>
            <person name="Zhang Q."/>
            <person name="Beckler D."/>
            <person name="Munir S."/>
            <person name="Li L."/>
            <person name="Kinsley K."/>
            <person name="Herron L."/>
            <person name="Peterson A."/>
            <person name="May B."/>
            <person name="Singh S."/>
            <person name="Gebhart C."/>
            <person name="Kapur V."/>
        </authorList>
    </citation>
    <scope>NUCLEOTIDE SEQUENCE [LARGE SCALE GENOMIC DNA]</scope>
    <source>
        <strain>PHE/MN1-00</strain>
    </source>
</reference>
<sequence length="457" mass="50600">MDQDACTHSAALILAAGKGTRMCSNKPKVLHTLLGEPLLFHVISALRPLFGSNIWVVIGHGSSLIQSICSDLSLNFIYQEKQLGTANAVSIALPVLQQSRIKRLMVINGDMPLITSDLLECIIKKSDKTDFVFATLKLPLPNDYGRILRREGKIYSIIEAKDIEPSLQHDTTVEVNAGLYYFSLEVVDKCLPMIKNENKSQEYYFTDIIELAVENGYLVDSIYFEEDWHFLGVNTPKDLSYVESIQQAFIIEKLLQSGVIIHSPESVRISPFATIEPGVEIYGPCEIYGASYIASGSIIYSHSWIKNTTISHDVCIYSFCHLDTVIIKDKCSIGPYARLRPGCHLEEQVCIGNFVEIKKTQLGKHVKINHLSYIGDAIVGDESNIGAGTITCNYDGENKHHTFIGKKAFIGSNTALVAPLTIGEKSLIGAGSVIIRDVPENMVSIARGKQKNFSKRK</sequence>
<protein>
    <recommendedName>
        <fullName evidence="1">Bifunctional protein GlmU</fullName>
    </recommendedName>
    <domain>
        <recommendedName>
            <fullName evidence="1">UDP-N-acetylglucosamine pyrophosphorylase</fullName>
            <ecNumber evidence="1">2.7.7.23</ecNumber>
        </recommendedName>
        <alternativeName>
            <fullName evidence="1">N-acetylglucosamine-1-phosphate uridyltransferase</fullName>
        </alternativeName>
    </domain>
    <domain>
        <recommendedName>
            <fullName evidence="1">Glucosamine-1-phosphate N-acetyltransferase</fullName>
            <ecNumber evidence="1">2.3.1.157</ecNumber>
        </recommendedName>
    </domain>
</protein>